<dbReference type="EC" id="3.6.-.-" evidence="7"/>
<dbReference type="EC" id="2.7.11.1" evidence="7"/>
<dbReference type="EMBL" id="AJ248288">
    <property type="protein sequence ID" value="CAB50493.1"/>
    <property type="molecule type" value="Genomic_DNA"/>
</dbReference>
<dbReference type="EMBL" id="HE613800">
    <property type="protein sequence ID" value="CCE71048.1"/>
    <property type="molecule type" value="Genomic_DNA"/>
</dbReference>
<dbReference type="PIR" id="G75006">
    <property type="entry name" value="G75006"/>
</dbReference>
<dbReference type="RefSeq" id="WP_010868707.1">
    <property type="nucleotide sequence ID" value="NC_000868.1"/>
</dbReference>
<dbReference type="SMR" id="Q9UYB9"/>
<dbReference type="STRING" id="272844.PAB1047"/>
<dbReference type="KEGG" id="pab:PAB1047"/>
<dbReference type="PATRIC" id="fig|272844.11.peg.1695"/>
<dbReference type="eggNOG" id="arCOG01185">
    <property type="taxonomic scope" value="Archaea"/>
</dbReference>
<dbReference type="HOGENOM" id="CLU_063953_2_0_2"/>
<dbReference type="OrthoDB" id="31344at2157"/>
<dbReference type="PhylomeDB" id="Q9UYB9"/>
<dbReference type="Proteomes" id="UP000000810">
    <property type="component" value="Chromosome"/>
</dbReference>
<dbReference type="Proteomes" id="UP000009139">
    <property type="component" value="Chromosome"/>
</dbReference>
<dbReference type="GO" id="GO:0005829">
    <property type="term" value="C:cytosol"/>
    <property type="evidence" value="ECO:0007669"/>
    <property type="project" value="TreeGrafter"/>
</dbReference>
<dbReference type="GO" id="GO:0000408">
    <property type="term" value="C:EKC/KEOPS complex"/>
    <property type="evidence" value="ECO:0000314"/>
    <property type="project" value="UniProtKB"/>
</dbReference>
<dbReference type="GO" id="GO:0005524">
    <property type="term" value="F:ATP binding"/>
    <property type="evidence" value="ECO:0007669"/>
    <property type="project" value="UniProtKB-KW"/>
</dbReference>
<dbReference type="GO" id="GO:0016887">
    <property type="term" value="F:ATP hydrolysis activity"/>
    <property type="evidence" value="ECO:0000314"/>
    <property type="project" value="UniProtKB"/>
</dbReference>
<dbReference type="GO" id="GO:0106310">
    <property type="term" value="F:protein serine kinase activity"/>
    <property type="evidence" value="ECO:0007669"/>
    <property type="project" value="RHEA"/>
</dbReference>
<dbReference type="GO" id="GO:0004674">
    <property type="term" value="F:protein serine/threonine kinase activity"/>
    <property type="evidence" value="ECO:0007669"/>
    <property type="project" value="UniProtKB-KW"/>
</dbReference>
<dbReference type="GO" id="GO:0002949">
    <property type="term" value="P:tRNA threonylcarbamoyladenosine modification"/>
    <property type="evidence" value="ECO:0000314"/>
    <property type="project" value="UniProtKB"/>
</dbReference>
<dbReference type="FunFam" id="1.10.510.10:FF:000951">
    <property type="entry name" value="EKC/KEOPS complex subunit BUD32"/>
    <property type="match status" value="1"/>
</dbReference>
<dbReference type="FunFam" id="3.30.200.20:FF:000201">
    <property type="entry name" value="TP53-regulating kinase isoform X1"/>
    <property type="match status" value="1"/>
</dbReference>
<dbReference type="Gene3D" id="3.30.200.20">
    <property type="entry name" value="Phosphorylase Kinase, domain 1"/>
    <property type="match status" value="1"/>
</dbReference>
<dbReference type="Gene3D" id="1.10.510.10">
    <property type="entry name" value="Transferase(Phosphotransferase) domain 1"/>
    <property type="match status" value="1"/>
</dbReference>
<dbReference type="InterPro" id="IPR022495">
    <property type="entry name" value="Bud32"/>
</dbReference>
<dbReference type="InterPro" id="IPR011009">
    <property type="entry name" value="Kinase-like_dom_sf"/>
</dbReference>
<dbReference type="InterPro" id="IPR000719">
    <property type="entry name" value="Prot_kinase_dom"/>
</dbReference>
<dbReference type="InterPro" id="IPR018934">
    <property type="entry name" value="RIO_dom"/>
</dbReference>
<dbReference type="InterPro" id="IPR008266">
    <property type="entry name" value="Tyr_kinase_AS"/>
</dbReference>
<dbReference type="NCBIfam" id="TIGR03724">
    <property type="entry name" value="arch_bud32"/>
    <property type="match status" value="1"/>
</dbReference>
<dbReference type="NCBIfam" id="NF011462">
    <property type="entry name" value="PRK14879.1-3"/>
    <property type="match status" value="1"/>
</dbReference>
<dbReference type="NCBIfam" id="NF011463">
    <property type="entry name" value="PRK14879.1-4"/>
    <property type="match status" value="1"/>
</dbReference>
<dbReference type="NCBIfam" id="NF011464">
    <property type="entry name" value="PRK14879.1-7"/>
    <property type="match status" value="1"/>
</dbReference>
<dbReference type="PANTHER" id="PTHR12209:SF0">
    <property type="entry name" value="EKC_KEOPS COMPLEX SUBUNIT TP53RK"/>
    <property type="match status" value="1"/>
</dbReference>
<dbReference type="PANTHER" id="PTHR12209">
    <property type="entry name" value="NON-SPECIFIC SERINE/THREONINE PROTEIN KINASE"/>
    <property type="match status" value="1"/>
</dbReference>
<dbReference type="Pfam" id="PF01163">
    <property type="entry name" value="RIO1"/>
    <property type="match status" value="1"/>
</dbReference>
<dbReference type="SMART" id="SM00220">
    <property type="entry name" value="S_TKc"/>
    <property type="match status" value="1"/>
</dbReference>
<dbReference type="SUPFAM" id="SSF56112">
    <property type="entry name" value="Protein kinase-like (PK-like)"/>
    <property type="match status" value="1"/>
</dbReference>
<dbReference type="PROSITE" id="PS50011">
    <property type="entry name" value="PROTEIN_KINASE_DOM"/>
    <property type="match status" value="1"/>
</dbReference>
<dbReference type="PROSITE" id="PS00109">
    <property type="entry name" value="PROTEIN_KINASE_TYR"/>
    <property type="match status" value="1"/>
</dbReference>
<gene>
    <name type="primary">bud32</name>
    <name type="ordered locus">PAB1047</name>
    <name type="ordered locus">PYRAB15890</name>
</gene>
<accession>Q9UYB9</accession>
<comment type="function">
    <text evidence="4 5">Component of the KEOPS complex that is required for the formation of a threonylcarbamoyl group on adenosine at position 37 (t(6)A37) in tRNAs that read codons beginning with adenine. The complex is probably involved in the transfer of the threonylcarbamoyl moiety of threonylcarbamoyl-AMP (TC-AMP) to the N6 group of A37. Bud32 has ATPase activity in the context of the KEOPS complex and likely plays a supporting role to the catalytic subunit Kae1.</text>
</comment>
<comment type="catalytic activity">
    <reaction evidence="7">
        <text>L-seryl-[protein] + ATP = O-phospho-L-seryl-[protein] + ADP + H(+)</text>
        <dbReference type="Rhea" id="RHEA:17989"/>
        <dbReference type="Rhea" id="RHEA-COMP:9863"/>
        <dbReference type="Rhea" id="RHEA-COMP:11604"/>
        <dbReference type="ChEBI" id="CHEBI:15378"/>
        <dbReference type="ChEBI" id="CHEBI:29999"/>
        <dbReference type="ChEBI" id="CHEBI:30616"/>
        <dbReference type="ChEBI" id="CHEBI:83421"/>
        <dbReference type="ChEBI" id="CHEBI:456216"/>
        <dbReference type="EC" id="2.7.11.1"/>
    </reaction>
</comment>
<comment type="catalytic activity">
    <reaction evidence="7">
        <text>L-threonyl-[protein] + ATP = O-phospho-L-threonyl-[protein] + ADP + H(+)</text>
        <dbReference type="Rhea" id="RHEA:46608"/>
        <dbReference type="Rhea" id="RHEA-COMP:11060"/>
        <dbReference type="Rhea" id="RHEA-COMP:11605"/>
        <dbReference type="ChEBI" id="CHEBI:15378"/>
        <dbReference type="ChEBI" id="CHEBI:30013"/>
        <dbReference type="ChEBI" id="CHEBI:30616"/>
        <dbReference type="ChEBI" id="CHEBI:61977"/>
        <dbReference type="ChEBI" id="CHEBI:456216"/>
        <dbReference type="EC" id="2.7.11.1"/>
    </reaction>
</comment>
<comment type="subunit">
    <text evidence="4 5">Component of the KEOPS complex that consists of Kae1, Bud32, Cgi121 and Pcc1; the whole complex dimerizes.</text>
</comment>
<comment type="subcellular location">
    <subcellularLocation>
        <location evidence="1">Cytoplasm</location>
    </subcellularLocation>
</comment>
<comment type="domain">
    <text evidence="1 7">This protein is considered an atypical serine/threonine kinase, because it lacks the conventional structural elements necessary for the substrate recognition as well as a lysine residue that in all other serine/threonine kinases participates in the catalytic event (By similarity). Bud32 has protein kinase activity in vitro, but in the context of the KEOPS complex, the catalytic subunit Kae1 switches the activity of Bud32 from kinase into ATPase (PubMed:23945934).</text>
</comment>
<comment type="similarity">
    <text evidence="6">Belongs to the protein kinase superfamily. BUD32 family.</text>
</comment>
<feature type="chain" id="PRO_0000430322" description="KEOPS complex subunit Bud32">
    <location>
        <begin position="1"/>
        <end position="220"/>
    </location>
</feature>
<feature type="domain" description="Protein kinase" evidence="2">
    <location>
        <begin position="1"/>
        <end position="220"/>
    </location>
</feature>
<feature type="active site" description="Proton acceptor" evidence="2 3">
    <location>
        <position position="127"/>
    </location>
</feature>
<feature type="binding site" evidence="2">
    <location>
        <begin position="4"/>
        <end position="12"/>
    </location>
    <ligand>
        <name>ATP</name>
        <dbReference type="ChEBI" id="CHEBI:30616"/>
    </ligand>
</feature>
<feature type="binding site" evidence="2">
    <location>
        <position position="27"/>
    </location>
    <ligand>
        <name>ATP</name>
        <dbReference type="ChEBI" id="CHEBI:30616"/>
    </ligand>
</feature>
<feature type="mutagenesis site" description="Completely abolishes ATPase activity of the KEOPS complex and completely impairs the tRNA modification activity of the complex." evidence="5">
    <original>D</original>
    <variation>R</variation>
    <location>
        <position position="127"/>
    </location>
</feature>
<keyword id="KW-0067">ATP-binding</keyword>
<keyword id="KW-0963">Cytoplasm</keyword>
<keyword id="KW-0378">Hydrolase</keyword>
<keyword id="KW-0418">Kinase</keyword>
<keyword id="KW-0547">Nucleotide-binding</keyword>
<keyword id="KW-0723">Serine/threonine-protein kinase</keyword>
<keyword id="KW-0808">Transferase</keyword>
<keyword id="KW-0819">tRNA processing</keyword>
<protein>
    <recommendedName>
        <fullName>KEOPS complex subunit Bud32</fullName>
        <ecNumber evidence="7">3.6.-.-</ecNumber>
    </recommendedName>
    <alternativeName>
        <fullName>Atypical serine/threonine protein kinase Bud32</fullName>
        <ecNumber evidence="7">2.7.11.1</ecNumber>
    </alternativeName>
</protein>
<sequence>MKLIKQGAEAKIYLAEFSELYFDYPIKVIVKERIKKRYRIPEIDLKLRKERTIREARILRRAKEFGVNVPYVFEVDTKNMIIVMEYIEGERLKELLEKLPMEERLKVCREVGRQIGKLHEAGIVHGDLTTSNMILREGKVYFIDFGLAEFDDTIEAQGVDLHLLKRAMESTHYKWFERGFEEVLKGYIEIRGEDKGREIREKIREIELRGRYRERSWITQ</sequence>
<organism>
    <name type="scientific">Pyrococcus abyssi (strain GE5 / Orsay)</name>
    <dbReference type="NCBI Taxonomy" id="272844"/>
    <lineage>
        <taxon>Archaea</taxon>
        <taxon>Methanobacteriati</taxon>
        <taxon>Methanobacteriota</taxon>
        <taxon>Thermococci</taxon>
        <taxon>Thermococcales</taxon>
        <taxon>Thermococcaceae</taxon>
        <taxon>Pyrococcus</taxon>
    </lineage>
</organism>
<name>BUD32_PYRAB</name>
<evidence type="ECO:0000250" key="1">
    <source>
        <dbReference type="UniProtKB" id="P53323"/>
    </source>
</evidence>
<evidence type="ECO:0000255" key="2">
    <source>
        <dbReference type="PROSITE-ProRule" id="PRU00159"/>
    </source>
</evidence>
<evidence type="ECO:0000255" key="3">
    <source>
        <dbReference type="PROSITE-ProRule" id="PRU10028"/>
    </source>
</evidence>
<evidence type="ECO:0000269" key="4">
    <source>
    </source>
</evidence>
<evidence type="ECO:0000269" key="5">
    <source>
    </source>
</evidence>
<evidence type="ECO:0000305" key="6"/>
<evidence type="ECO:0000305" key="7">
    <source>
    </source>
</evidence>
<reference key="1">
    <citation type="journal article" date="2003" name="Mol. Microbiol.">
        <title>An integrated analysis of the genome of the hyperthermophilic archaeon Pyrococcus abyssi.</title>
        <authorList>
            <person name="Cohen G.N."/>
            <person name="Barbe V."/>
            <person name="Flament D."/>
            <person name="Galperin M."/>
            <person name="Heilig R."/>
            <person name="Lecompte O."/>
            <person name="Poch O."/>
            <person name="Prieur D."/>
            <person name="Querellou J."/>
            <person name="Ripp R."/>
            <person name="Thierry J.-C."/>
            <person name="Van der Oost J."/>
            <person name="Weissenbach J."/>
            <person name="Zivanovic Y."/>
            <person name="Forterre P."/>
        </authorList>
    </citation>
    <scope>NUCLEOTIDE SEQUENCE [LARGE SCALE GENOMIC DNA]</scope>
    <source>
        <strain>GE5 / Orsay</strain>
    </source>
</reference>
<reference key="2">
    <citation type="journal article" date="2012" name="Curr. Microbiol.">
        <title>Re-annotation of two hyperthermophilic archaea Pyrococcus abyssi GE5 and Pyrococcus furiosus DSM 3638.</title>
        <authorList>
            <person name="Gao J."/>
            <person name="Wang J."/>
        </authorList>
    </citation>
    <scope>GENOME REANNOTATION</scope>
    <source>
        <strain>GE5 / Orsay</strain>
    </source>
</reference>
<reference key="3">
    <citation type="journal article" date="2013" name="Nucleic Acids Res.">
        <title>In vitro biosynthesis of a universal t6A tRNA modification in Archaea and Eukarya.</title>
        <authorList>
            <person name="Perrochia L."/>
            <person name="Crozat E."/>
            <person name="Hecker A."/>
            <person name="Zhang W."/>
            <person name="Bareille J."/>
            <person name="Collinet B."/>
            <person name="van Tilbeurgh H."/>
            <person name="Forterre P."/>
            <person name="Basta T."/>
        </authorList>
    </citation>
    <scope>FUNCTION IN T(6)A TRNA MODIFICATION</scope>
    <scope>SUBUNIT</scope>
</reference>
<reference key="4">
    <citation type="journal article" date="2013" name="Nucleic Acids Res.">
        <title>Functional assignment of KEOPS/EKC complex subunits in the biosynthesis of the universal t6A tRNA modification.</title>
        <authorList>
            <person name="Perrochia L."/>
            <person name="Guetta D."/>
            <person name="Hecker A."/>
            <person name="Forterre P."/>
            <person name="Basta T."/>
        </authorList>
    </citation>
    <scope>FUNCTION IN THE KEOPS COMPLEX</scope>
    <scope>CATALYTIC ACTIVITY</scope>
    <scope>SUBUNIT</scope>
    <scope>MUTAGENESIS OF ASP-127</scope>
</reference>
<proteinExistence type="evidence at protein level"/>